<organism>
    <name type="scientific">Mus musculus</name>
    <name type="common">Mouse</name>
    <dbReference type="NCBI Taxonomy" id="10090"/>
    <lineage>
        <taxon>Eukaryota</taxon>
        <taxon>Metazoa</taxon>
        <taxon>Chordata</taxon>
        <taxon>Craniata</taxon>
        <taxon>Vertebrata</taxon>
        <taxon>Euteleostomi</taxon>
        <taxon>Mammalia</taxon>
        <taxon>Eutheria</taxon>
        <taxon>Euarchontoglires</taxon>
        <taxon>Glires</taxon>
        <taxon>Rodentia</taxon>
        <taxon>Myomorpha</taxon>
        <taxon>Muroidea</taxon>
        <taxon>Muridae</taxon>
        <taxon>Murinae</taxon>
        <taxon>Mus</taxon>
        <taxon>Mus</taxon>
    </lineage>
</organism>
<proteinExistence type="evidence at protein level"/>
<protein>
    <recommendedName>
        <fullName>Coiled-coil domain-containing protein 136</fullName>
    </recommendedName>
</protein>
<accession>Q3TVA9</accession>
<accession>Q923E5</accession>
<dbReference type="EMBL" id="AC044807">
    <property type="status" value="NOT_ANNOTATED_CDS"/>
    <property type="molecule type" value="Genomic_DNA"/>
</dbReference>
<dbReference type="EMBL" id="BC006583">
    <property type="protein sequence ID" value="AAH06583.1"/>
    <property type="status" value="ALT_INIT"/>
    <property type="molecule type" value="mRNA"/>
</dbReference>
<dbReference type="EMBL" id="AK160245">
    <property type="protein sequence ID" value="BAE35710.1"/>
    <property type="status" value="ALT_SEQ"/>
    <property type="molecule type" value="mRNA"/>
</dbReference>
<dbReference type="RefSeq" id="NP_001188307.1">
    <property type="nucleotide sequence ID" value="NM_001201378.1"/>
</dbReference>
<dbReference type="RefSeq" id="NP_663549.3">
    <property type="nucleotide sequence ID" value="NM_145574.3"/>
</dbReference>
<dbReference type="SMR" id="Q3TVA9"/>
<dbReference type="FunCoup" id="Q3TVA9">
    <property type="interactions" value="67"/>
</dbReference>
<dbReference type="STRING" id="10090.ENSMUSP00000093789"/>
<dbReference type="GlyGen" id="Q3TVA9">
    <property type="glycosylation" value="1 site, 1 N-linked glycan (1 site)"/>
</dbReference>
<dbReference type="iPTMnet" id="Q3TVA9"/>
<dbReference type="PhosphoSitePlus" id="Q3TVA9"/>
<dbReference type="SwissPalm" id="Q3TVA9"/>
<dbReference type="jPOST" id="Q3TVA9"/>
<dbReference type="PaxDb" id="10090-ENSMUSP00000093789"/>
<dbReference type="ProteomicsDB" id="265692">
    <molecule id="Q3TVA9-1"/>
</dbReference>
<dbReference type="ProteomicsDB" id="265693">
    <molecule id="Q3TVA9-2"/>
</dbReference>
<dbReference type="DNASU" id="232664"/>
<dbReference type="GeneID" id="232664"/>
<dbReference type="KEGG" id="mmu:232664"/>
<dbReference type="UCSC" id="uc009bdl.1">
    <molecule id="Q3TVA9-1"/>
    <property type="organism name" value="mouse"/>
</dbReference>
<dbReference type="AGR" id="MGI:1918128"/>
<dbReference type="CTD" id="64753"/>
<dbReference type="MGI" id="MGI:1918128">
    <property type="gene designation" value="Ccdc136"/>
</dbReference>
<dbReference type="eggNOG" id="ENOG502RZUE">
    <property type="taxonomic scope" value="Eukaryota"/>
</dbReference>
<dbReference type="InParanoid" id="Q3TVA9"/>
<dbReference type="OrthoDB" id="9948923at2759"/>
<dbReference type="PhylomeDB" id="Q3TVA9"/>
<dbReference type="BioGRID-ORCS" id="232664">
    <property type="hits" value="5 hits in 76 CRISPR screens"/>
</dbReference>
<dbReference type="ChiTaRS" id="Ccdc136">
    <property type="organism name" value="mouse"/>
</dbReference>
<dbReference type="PRO" id="PR:Q3TVA9"/>
<dbReference type="Proteomes" id="UP000000589">
    <property type="component" value="Unplaced"/>
</dbReference>
<dbReference type="RNAct" id="Q3TVA9">
    <property type="molecule type" value="protein"/>
</dbReference>
<dbReference type="GO" id="GO:0002080">
    <property type="term" value="C:acrosomal membrane"/>
    <property type="evidence" value="ECO:0000315"/>
    <property type="project" value="UniProtKB"/>
</dbReference>
<dbReference type="GO" id="GO:0005739">
    <property type="term" value="C:mitochondrion"/>
    <property type="evidence" value="ECO:0007005"/>
    <property type="project" value="MGI"/>
</dbReference>
<dbReference type="GO" id="GO:0001675">
    <property type="term" value="P:acrosome assembly"/>
    <property type="evidence" value="ECO:0000315"/>
    <property type="project" value="UniProtKB"/>
</dbReference>
<dbReference type="GO" id="GO:0007338">
    <property type="term" value="P:single fertilization"/>
    <property type="evidence" value="ECO:0000315"/>
    <property type="project" value="UniProtKB"/>
</dbReference>
<dbReference type="GO" id="GO:0007283">
    <property type="term" value="P:spermatogenesis"/>
    <property type="evidence" value="ECO:0000315"/>
    <property type="project" value="UniProtKB"/>
</dbReference>
<dbReference type="InterPro" id="IPR051176">
    <property type="entry name" value="Cent_Immune-Sig_Mod"/>
</dbReference>
<dbReference type="PANTHER" id="PTHR15715">
    <property type="entry name" value="CENTROSOMAL PROTEIN OF 170 KDA"/>
    <property type="match status" value="1"/>
</dbReference>
<dbReference type="PANTHER" id="PTHR15715:SF26">
    <property type="entry name" value="COILED-COIL DOMAIN-CONTAINING PROTEIN 136"/>
    <property type="match status" value="1"/>
</dbReference>
<gene>
    <name type="primary">Ccdc136</name>
</gene>
<reference key="1">
    <citation type="journal article" date="2009" name="PLoS Biol.">
        <title>Lineage-specific biology revealed by a finished genome assembly of the mouse.</title>
        <authorList>
            <person name="Church D.M."/>
            <person name="Goodstadt L."/>
            <person name="Hillier L.W."/>
            <person name="Zody M.C."/>
            <person name="Goldstein S."/>
            <person name="She X."/>
            <person name="Bult C.J."/>
            <person name="Agarwala R."/>
            <person name="Cherry J.L."/>
            <person name="DiCuccio M."/>
            <person name="Hlavina W."/>
            <person name="Kapustin Y."/>
            <person name="Meric P."/>
            <person name="Maglott D."/>
            <person name="Birtle Z."/>
            <person name="Marques A.C."/>
            <person name="Graves T."/>
            <person name="Zhou S."/>
            <person name="Teague B."/>
            <person name="Potamousis K."/>
            <person name="Churas C."/>
            <person name="Place M."/>
            <person name="Herschleb J."/>
            <person name="Runnheim R."/>
            <person name="Forrest D."/>
            <person name="Amos-Landgraf J."/>
            <person name="Schwartz D.C."/>
            <person name="Cheng Z."/>
            <person name="Lindblad-Toh K."/>
            <person name="Eichler E.E."/>
            <person name="Ponting C.P."/>
        </authorList>
    </citation>
    <scope>NUCLEOTIDE SEQUENCE [LARGE SCALE GENOMIC DNA]</scope>
    <source>
        <strain>C57BL/6J</strain>
    </source>
</reference>
<reference key="2">
    <citation type="journal article" date="2004" name="Genome Res.">
        <title>The status, quality, and expansion of the NIH full-length cDNA project: the Mammalian Gene Collection (MGC).</title>
        <authorList>
            <consortium name="The MGC Project Team"/>
        </authorList>
    </citation>
    <scope>NUCLEOTIDE SEQUENCE [LARGE SCALE MRNA] OF 257-1136 (ISOFORM 2)</scope>
    <source>
        <strain>Czech II</strain>
        <tissue>Mammary tumor</tissue>
    </source>
</reference>
<reference key="3">
    <citation type="journal article" date="2005" name="Science">
        <title>The transcriptional landscape of the mammalian genome.</title>
        <authorList>
            <person name="Carninci P."/>
            <person name="Kasukawa T."/>
            <person name="Katayama S."/>
            <person name="Gough J."/>
            <person name="Frith M.C."/>
            <person name="Maeda N."/>
            <person name="Oyama R."/>
            <person name="Ravasi T."/>
            <person name="Lenhard B."/>
            <person name="Wells C."/>
            <person name="Kodzius R."/>
            <person name="Shimokawa K."/>
            <person name="Bajic V.B."/>
            <person name="Brenner S.E."/>
            <person name="Batalov S."/>
            <person name="Forrest A.R."/>
            <person name="Zavolan M."/>
            <person name="Davis M.J."/>
            <person name="Wilming L.G."/>
            <person name="Aidinis V."/>
            <person name="Allen J.E."/>
            <person name="Ambesi-Impiombato A."/>
            <person name="Apweiler R."/>
            <person name="Aturaliya R.N."/>
            <person name="Bailey T.L."/>
            <person name="Bansal M."/>
            <person name="Baxter L."/>
            <person name="Beisel K.W."/>
            <person name="Bersano T."/>
            <person name="Bono H."/>
            <person name="Chalk A.M."/>
            <person name="Chiu K.P."/>
            <person name="Choudhary V."/>
            <person name="Christoffels A."/>
            <person name="Clutterbuck D.R."/>
            <person name="Crowe M.L."/>
            <person name="Dalla E."/>
            <person name="Dalrymple B.P."/>
            <person name="de Bono B."/>
            <person name="Della Gatta G."/>
            <person name="di Bernardo D."/>
            <person name="Down T."/>
            <person name="Engstrom P."/>
            <person name="Fagiolini M."/>
            <person name="Faulkner G."/>
            <person name="Fletcher C.F."/>
            <person name="Fukushima T."/>
            <person name="Furuno M."/>
            <person name="Futaki S."/>
            <person name="Gariboldi M."/>
            <person name="Georgii-Hemming P."/>
            <person name="Gingeras T.R."/>
            <person name="Gojobori T."/>
            <person name="Green R.E."/>
            <person name="Gustincich S."/>
            <person name="Harbers M."/>
            <person name="Hayashi Y."/>
            <person name="Hensch T.K."/>
            <person name="Hirokawa N."/>
            <person name="Hill D."/>
            <person name="Huminiecki L."/>
            <person name="Iacono M."/>
            <person name="Ikeo K."/>
            <person name="Iwama A."/>
            <person name="Ishikawa T."/>
            <person name="Jakt M."/>
            <person name="Kanapin A."/>
            <person name="Katoh M."/>
            <person name="Kawasawa Y."/>
            <person name="Kelso J."/>
            <person name="Kitamura H."/>
            <person name="Kitano H."/>
            <person name="Kollias G."/>
            <person name="Krishnan S.P."/>
            <person name="Kruger A."/>
            <person name="Kummerfeld S.K."/>
            <person name="Kurochkin I.V."/>
            <person name="Lareau L.F."/>
            <person name="Lazarevic D."/>
            <person name="Lipovich L."/>
            <person name="Liu J."/>
            <person name="Liuni S."/>
            <person name="McWilliam S."/>
            <person name="Madan Babu M."/>
            <person name="Madera M."/>
            <person name="Marchionni L."/>
            <person name="Matsuda H."/>
            <person name="Matsuzawa S."/>
            <person name="Miki H."/>
            <person name="Mignone F."/>
            <person name="Miyake S."/>
            <person name="Morris K."/>
            <person name="Mottagui-Tabar S."/>
            <person name="Mulder N."/>
            <person name="Nakano N."/>
            <person name="Nakauchi H."/>
            <person name="Ng P."/>
            <person name="Nilsson R."/>
            <person name="Nishiguchi S."/>
            <person name="Nishikawa S."/>
            <person name="Nori F."/>
            <person name="Ohara O."/>
            <person name="Okazaki Y."/>
            <person name="Orlando V."/>
            <person name="Pang K.C."/>
            <person name="Pavan W.J."/>
            <person name="Pavesi G."/>
            <person name="Pesole G."/>
            <person name="Petrovsky N."/>
            <person name="Piazza S."/>
            <person name="Reed J."/>
            <person name="Reid J.F."/>
            <person name="Ring B.Z."/>
            <person name="Ringwald M."/>
            <person name="Rost B."/>
            <person name="Ruan Y."/>
            <person name="Salzberg S.L."/>
            <person name="Sandelin A."/>
            <person name="Schneider C."/>
            <person name="Schoenbach C."/>
            <person name="Sekiguchi K."/>
            <person name="Semple C.A."/>
            <person name="Seno S."/>
            <person name="Sessa L."/>
            <person name="Sheng Y."/>
            <person name="Shibata Y."/>
            <person name="Shimada H."/>
            <person name="Shimada K."/>
            <person name="Silva D."/>
            <person name="Sinclair B."/>
            <person name="Sperling S."/>
            <person name="Stupka E."/>
            <person name="Sugiura K."/>
            <person name="Sultana R."/>
            <person name="Takenaka Y."/>
            <person name="Taki K."/>
            <person name="Tammoja K."/>
            <person name="Tan S.L."/>
            <person name="Tang S."/>
            <person name="Taylor M.S."/>
            <person name="Tegner J."/>
            <person name="Teichmann S.A."/>
            <person name="Ueda H.R."/>
            <person name="van Nimwegen E."/>
            <person name="Verardo R."/>
            <person name="Wei C.L."/>
            <person name="Yagi K."/>
            <person name="Yamanishi H."/>
            <person name="Zabarovsky E."/>
            <person name="Zhu S."/>
            <person name="Zimmer A."/>
            <person name="Hide W."/>
            <person name="Bult C."/>
            <person name="Grimmond S.M."/>
            <person name="Teasdale R.D."/>
            <person name="Liu E.T."/>
            <person name="Brusic V."/>
            <person name="Quackenbush J."/>
            <person name="Wahlestedt C."/>
            <person name="Mattick J.S."/>
            <person name="Hume D.A."/>
            <person name="Kai C."/>
            <person name="Sasaki D."/>
            <person name="Tomaru Y."/>
            <person name="Fukuda S."/>
            <person name="Kanamori-Katayama M."/>
            <person name="Suzuki M."/>
            <person name="Aoki J."/>
            <person name="Arakawa T."/>
            <person name="Iida J."/>
            <person name="Imamura K."/>
            <person name="Itoh M."/>
            <person name="Kato T."/>
            <person name="Kawaji H."/>
            <person name="Kawagashira N."/>
            <person name="Kawashima T."/>
            <person name="Kojima M."/>
            <person name="Kondo S."/>
            <person name="Konno H."/>
            <person name="Nakano K."/>
            <person name="Ninomiya N."/>
            <person name="Nishio T."/>
            <person name="Okada M."/>
            <person name="Plessy C."/>
            <person name="Shibata K."/>
            <person name="Shiraki T."/>
            <person name="Suzuki S."/>
            <person name="Tagami M."/>
            <person name="Waki K."/>
            <person name="Watahiki A."/>
            <person name="Okamura-Oho Y."/>
            <person name="Suzuki H."/>
            <person name="Kawai J."/>
            <person name="Hayashizaki Y."/>
        </authorList>
    </citation>
    <scope>NUCLEOTIDE SEQUENCE [LARGE SCALE MRNA] OF 396-1029 (ISOFORM 1)</scope>
    <source>
        <strain>C57BL/6J</strain>
        <tissue>Testis</tissue>
    </source>
</reference>
<reference key="4">
    <citation type="journal article" date="2010" name="Cell">
        <title>A tissue-specific atlas of mouse protein phosphorylation and expression.</title>
        <authorList>
            <person name="Huttlin E.L."/>
            <person name="Jedrychowski M.P."/>
            <person name="Elias J.E."/>
            <person name="Goswami T."/>
            <person name="Rad R."/>
            <person name="Beausoleil S.A."/>
            <person name="Villen J."/>
            <person name="Haas W."/>
            <person name="Sowa M.E."/>
            <person name="Gygi S.P."/>
        </authorList>
    </citation>
    <scope>PHOSPHORYLATION [LARGE SCALE ANALYSIS] AT SER-50</scope>
    <scope>IDENTIFICATION BY MASS SPECTROMETRY [LARGE SCALE ANALYSIS]</scope>
    <source>
        <tissue>Brain</tissue>
        <tissue>Testis</tissue>
    </source>
</reference>
<reference key="5">
    <citation type="journal article" date="2016" name="Reprod. Sci.">
        <title>A novel testis-specific gene, Ccdc136, is required for acrosome formation and fertilization in mice.</title>
        <authorList>
            <person name="Geng Q."/>
            <person name="Ni L."/>
            <person name="Ouyang B."/>
            <person name="Hu Y."/>
            <person name="Zhao Y."/>
            <person name="Guo J."/>
        </authorList>
    </citation>
    <scope>TISSUE SPECIFICITY</scope>
    <scope>DEVELOPMENTAL STAGE</scope>
    <scope>SUBCELLULAR LOCATION</scope>
    <scope>FUNCTION</scope>
    <scope>DISRUPTION PHENOTYPE</scope>
</reference>
<keyword id="KW-0025">Alternative splicing</keyword>
<keyword id="KW-0175">Coiled coil</keyword>
<keyword id="KW-0968">Cytoplasmic vesicle</keyword>
<keyword id="KW-0221">Differentiation</keyword>
<keyword id="KW-0278">Fertilization</keyword>
<keyword id="KW-0472">Membrane</keyword>
<keyword id="KW-0597">Phosphoprotein</keyword>
<keyword id="KW-1185">Reference proteome</keyword>
<keyword id="KW-0744">Spermatogenesis</keyword>
<keyword id="KW-0812">Transmembrane</keyword>
<keyword id="KW-1133">Transmembrane helix</keyword>
<comment type="function">
    <text evidence="3">May play a role in acrosome formation in spermatogenesis and in fertilization.</text>
</comment>
<comment type="subcellular location">
    <subcellularLocation>
        <location evidence="3">Cytoplasmic vesicle</location>
        <location evidence="3">Secretory vesicle</location>
        <location evidence="3">Acrosome membrane</location>
        <topology evidence="5">Single-pass membrane protein</topology>
    </subcellularLocation>
    <text evidence="3">Exclusively localized on a peripheral part of acrosome membrane (Golgi phase), localized on the equatorial segment of the acrosome (maturation phase).</text>
</comment>
<comment type="alternative products">
    <event type="alternative splicing"/>
    <isoform>
        <id>Q3TVA9-1</id>
        <name>1</name>
        <sequence type="displayed"/>
    </isoform>
    <isoform>
        <id>Q3TVA9-2</id>
        <name>2</name>
        <sequence type="described" ref="VSP_027846 VSP_027847 VSP_027848"/>
    </isoform>
</comment>
<comment type="tissue specificity">
    <text evidence="3">Present at high level in testis (at protein level).</text>
</comment>
<comment type="developmental stage">
    <text evidence="3">Increased in an age-dependent manner from postnatal 3 to 8 weeks.</text>
</comment>
<comment type="disruption phenotype">
    <text evidence="3">Males are infertile, due to severe defect of disrupting acrosome formation.</text>
</comment>
<comment type="sequence caution" evidence="5">
    <conflict type="erroneous initiation">
        <sequence resource="EMBL-CDS" id="AAH06583"/>
    </conflict>
</comment>
<comment type="sequence caution" evidence="5">
    <conflict type="erroneous initiation">
        <sequence resource="EMBL-CDS" id="BAE35710"/>
    </conflict>
    <text>Truncated N-terminus.</text>
</comment>
<comment type="sequence caution" evidence="5">
    <conflict type="erroneous termination">
        <sequence resource="EMBL-CDS" id="BAE35710"/>
    </conflict>
    <text>Truncated C-terminus.</text>
</comment>
<evidence type="ECO:0000255" key="1"/>
<evidence type="ECO:0000256" key="2">
    <source>
        <dbReference type="SAM" id="MobiDB-lite"/>
    </source>
</evidence>
<evidence type="ECO:0000269" key="3">
    <source>
    </source>
</evidence>
<evidence type="ECO:0000303" key="4">
    <source>
    </source>
</evidence>
<evidence type="ECO:0000305" key="5"/>
<evidence type="ECO:0007744" key="6">
    <source>
    </source>
</evidence>
<feature type="chain" id="PRO_0000300640" description="Coiled-coil domain-containing protein 136">
    <location>
        <begin position="1"/>
        <end position="1136"/>
    </location>
</feature>
<feature type="transmembrane region" description="Helical" evidence="1">
    <location>
        <begin position="1112"/>
        <end position="1132"/>
    </location>
</feature>
<feature type="region of interest" description="Disordered" evidence="2">
    <location>
        <begin position="1"/>
        <end position="46"/>
    </location>
</feature>
<feature type="region of interest" description="Disordered" evidence="2">
    <location>
        <begin position="741"/>
        <end position="773"/>
    </location>
</feature>
<feature type="region of interest" description="Disordered" evidence="2">
    <location>
        <begin position="814"/>
        <end position="837"/>
    </location>
</feature>
<feature type="region of interest" description="Disordered" evidence="2">
    <location>
        <begin position="965"/>
        <end position="990"/>
    </location>
</feature>
<feature type="region of interest" description="Disordered" evidence="2">
    <location>
        <begin position="1040"/>
        <end position="1111"/>
    </location>
</feature>
<feature type="coiled-coil region" evidence="1">
    <location>
        <begin position="293"/>
        <end position="631"/>
    </location>
</feature>
<feature type="coiled-coil region" evidence="1">
    <location>
        <begin position="681"/>
        <end position="730"/>
    </location>
</feature>
<feature type="coiled-coil region" evidence="1">
    <location>
        <begin position="839"/>
        <end position="972"/>
    </location>
</feature>
<feature type="coiled-coil region" evidence="1">
    <location>
        <begin position="1017"/>
        <end position="1057"/>
    </location>
</feature>
<feature type="compositionally biased region" description="Acidic residues" evidence="2">
    <location>
        <begin position="14"/>
        <end position="31"/>
    </location>
</feature>
<feature type="compositionally biased region" description="Polar residues" evidence="2">
    <location>
        <begin position="743"/>
        <end position="752"/>
    </location>
</feature>
<feature type="compositionally biased region" description="Low complexity" evidence="2">
    <location>
        <begin position="976"/>
        <end position="989"/>
    </location>
</feature>
<feature type="compositionally biased region" description="Basic and acidic residues" evidence="2">
    <location>
        <begin position="1040"/>
        <end position="1052"/>
    </location>
</feature>
<feature type="compositionally biased region" description="Acidic residues" evidence="2">
    <location>
        <begin position="1067"/>
        <end position="1091"/>
    </location>
</feature>
<feature type="modified residue" description="Phosphoserine" evidence="6">
    <location>
        <position position="50"/>
    </location>
</feature>
<feature type="splice variant" id="VSP_027846" description="In isoform 2." evidence="4">
    <location>
        <position position="361"/>
    </location>
</feature>
<feature type="splice variant" id="VSP_027847" description="In isoform 2." evidence="4">
    <original>IKELQTKLRELQLQYQASMDEQGRLLAVQEQLEGQ</original>
    <variation>NMFGMWKPMVFLAIAAVALYVLPNMRPQESEYYMK</variation>
    <location>
        <begin position="917"/>
        <end position="951"/>
    </location>
</feature>
<feature type="splice variant" id="VSP_027848" description="In isoform 2." evidence="4">
    <location>
        <begin position="952"/>
        <end position="1136"/>
    </location>
</feature>
<feature type="sequence conflict" description="In Ref. 2; AAH06583." evidence="5" ref="2">
    <original>S</original>
    <variation>N</variation>
    <location>
        <position position="412"/>
    </location>
</feature>
<name>CC136_MOUSE</name>
<sequence length="1136" mass="131930">MQAMDGEVLLPALYEEEEEEEEEEEEVEEEQVEKGGSLGSLSMGKHRGLSLTETELEELRAQVLQLVAELEETRELAGQHEDDSLELQGLLEDERLASAQQAEVFTKQIQQLQGELQHLREEISLLEHEKESELKEMEQELHLAQAEIQNLRQAAADSATEHESDIASLQDDLCRLQNDLDDMERIRGDYEMEIASLRAEMELKTSEPSNLSISDFSGIQDELHHLRERYNLLNEEYQALRESNSSLTGQLAELESDRTRRATERWLESHLLRSTMSSESQTSELDFPEPDPVMQLLRQQLLGAEEQMQDMQDKCKNLYCELEELQHHRRTSEEEQKRLQRELKCAQNEVLRFQTSHSTQQHEELKSRLCTLQQKYDASQDEHSELLKVQMQLETELQQLRLLRCTPVESQSEKELMCRLQKLQAQHQCSVNEKEQLLEVQHHLHDKLRCHESEVHRLRSMVDCLREKNEKNSGIHLQLQEMKGLYQFSRDELERQKHMYDQLEQDFLLCQQELTELKSSQSLCEENGNCSNKCDALLARLTELQDKFKASQEEIGHLQMEQCELLEDQRRLQEEQGQLQEELHRLTFPQPKCGILQKSQELLSKLQDLCEMQLLYQNMQEQQRKLTQNQECVLKEQLEAHKHLRGFKESHFQEVLANPQDARGPKSSSCENKFKVLMDQLQALQVLYDTSQKQQEVLQREHGRLMEERKRLQAELQLCMEEMQVLQTQSPMIKRSFEYCGKNSGSRAPSTENFHRSYESSIDENEGYQKSYVSSQPSTETFLKSYDSSTSANEAFEKSYCSSSTSVSYKKSYGSVSSGETLHRSYASSSTDEDPAEPEDLEHFEETVAKVLTKLQAVKALYQVSQEEHCQLQQRMHRLLAKQKELTEELQCCEKELRECMESLGKPLPPQSDKCEIKELQTKLRELQLQYQASMDEQGRLLAVQEQLEGQLQCCQEELRQLKENRPSISSEARGKNVNKNMNKNANGVRNKKLSMACSEDLENGFENEKNLEVMLYYKASQRRLDELMKEEKEIEEARKKEREKKAKKDLCKLATNPAADPRAEPEPTEDEEENFEEYREGEDESCEAAEEGNPLKLSESKKPSPAPDPPIFSLPLVGLVVISALLWCWWAETSS</sequence>